<name>SPN90_MOUSE</name>
<evidence type="ECO:0000250" key="1"/>
<evidence type="ECO:0000250" key="2">
    <source>
        <dbReference type="UniProtKB" id="Q9NZQ3"/>
    </source>
</evidence>
<evidence type="ECO:0000255" key="3"/>
<evidence type="ECO:0000255" key="4">
    <source>
        <dbReference type="PROSITE-ProRule" id="PRU00192"/>
    </source>
</evidence>
<evidence type="ECO:0000256" key="5">
    <source>
        <dbReference type="SAM" id="MobiDB-lite"/>
    </source>
</evidence>
<evidence type="ECO:0007744" key="6">
    <source>
    </source>
</evidence>
<accession>Q9ESJ4</accession>
<accession>Q3UYF3</accession>
<accession>Q68G72</accession>
<protein>
    <recommendedName>
        <fullName>NCK-interacting protein with SH3 domain</fullName>
    </recommendedName>
    <alternativeName>
        <fullName>54 kDa VacA-interacting protein</fullName>
        <shortName>VIP54</shortName>
    </alternativeName>
    <alternativeName>
        <fullName>90 kDa N-WASP-interacting protein</fullName>
    </alternativeName>
    <alternativeName>
        <fullName>90 kDa SH3 protein interacting with Nck</fullName>
    </alternativeName>
    <alternativeName>
        <fullName>SH3 adapter protein SPIN90</fullName>
    </alternativeName>
    <alternativeName>
        <fullName>WASP-interacting SH3-domain protein</fullName>
        <shortName>WISH</shortName>
    </alternativeName>
    <alternativeName>
        <fullName>Wiskott-Aldrich syndrome protein-binding protein</fullName>
        <shortName>N-WASP-binding protein</shortName>
    </alternativeName>
</protein>
<gene>
    <name type="primary">Nckipsd</name>
    <name type="synonym">Spin90</name>
    <name type="synonym">Wasbp</name>
</gene>
<keyword id="KW-0539">Nucleus</keyword>
<keyword id="KW-0597">Phosphoprotein</keyword>
<keyword id="KW-1185">Reference proteome</keyword>
<keyword id="KW-0728">SH3 domain</keyword>
<keyword id="KW-0729">SH3-binding</keyword>
<feature type="chain" id="PRO_0000072131" description="NCK-interacting protein with SH3 domain">
    <location>
        <begin position="1"/>
        <end position="714"/>
    </location>
</feature>
<feature type="domain" description="SH3" evidence="4">
    <location>
        <begin position="1"/>
        <end position="58"/>
    </location>
</feature>
<feature type="region of interest" description="Disordered" evidence="5">
    <location>
        <begin position="103"/>
        <end position="126"/>
    </location>
</feature>
<feature type="region of interest" description="Disordered" evidence="5">
    <location>
        <begin position="139"/>
        <end position="298"/>
    </location>
</feature>
<feature type="short sequence motif" description="Nuclear localization signal" evidence="3">
    <location>
        <begin position="168"/>
        <end position="185"/>
    </location>
</feature>
<feature type="compositionally biased region" description="Polar residues" evidence="5">
    <location>
        <begin position="106"/>
        <end position="121"/>
    </location>
</feature>
<feature type="compositionally biased region" description="Low complexity" evidence="5">
    <location>
        <begin position="200"/>
        <end position="215"/>
    </location>
</feature>
<feature type="compositionally biased region" description="Polar residues" evidence="5">
    <location>
        <begin position="216"/>
        <end position="226"/>
    </location>
</feature>
<feature type="compositionally biased region" description="Pro residues" evidence="5">
    <location>
        <begin position="252"/>
        <end position="263"/>
    </location>
</feature>
<feature type="modified residue" description="Phosphoserine" evidence="6">
    <location>
        <position position="120"/>
    </location>
</feature>
<feature type="modified residue" description="Phosphothreonine" evidence="2">
    <location>
        <position position="174"/>
    </location>
</feature>
<feature type="modified residue" description="Phosphoserine" evidence="6">
    <location>
        <position position="260"/>
    </location>
</feature>
<feature type="modified residue" description="Phosphoserine" evidence="6">
    <location>
        <position position="286"/>
    </location>
</feature>
<feature type="modified residue" description="Phosphoserine" evidence="6">
    <location>
        <position position="673"/>
    </location>
</feature>
<proteinExistence type="evidence at protein level"/>
<sequence>MYRALYAFRSAEPNAMAFAAGETFLVLERSSTHWWLAARARSGETGYVPPAYLHRLQGMEQDVLQAIDRAIEAVHNTAMRDGGKYSLEQRGVLQKLIHHRKETLSRRGTSASSATVMTPSTSDHHLDAAVSRQPNGVCRTGFERQHSLPSSEHLGTDGALYQVPPQPRRAAPTTPPPPVKRRDREALVISGSGGRTAIPSGGSSVSSGSSASSTSMDTLYTGSSPSELGPSCSPTPPPVPRRGAHTTVSQPQPSPSKAPSPEPPTEEVAAETNSTPDDLEAQDALSPETTEEKAAAETVVPRTIGAELMELVRRNTGLSHELCRVAIGVVVGHIQATVPASSPIMEQVLLSLVEGKDLSTALPSGQVCHDQQRLEVIFADLARRKDDAQQRSWALYEDEDVIRCYLEELLHILTDADPEVCKKMCKRSDFESVLALVAYYQMEHRASLRLLLLKCFGAMCSLDAAIISTLVSSVLPVELARDMQTDTQDHQKLCYSALVLAMVFSMGEAVPYAHYEHLGTPFAQFLLSIVEDGLPMDTTEQLPDLCMNLLLALNLHLTAPEQNVIMAALSRHTNVKIFSEKLLLLLNRGDDPVRIFRHEPQPPHSVLKFLQDVFSSSATAAIFYHTDMMALIDITVRQIADLSPGDKLRMEYLSLMHAVVRSTPYLQHRHRLSDLQATLRRILTEEEASPQCQMDRMIVQEMYKEFPDLGEVPS</sequence>
<reference key="1">
    <citation type="journal article" date="2001" name="J. Cell Biol.">
        <title>A novel neural Wiskott-Aldrich syndrome protein (N-WASP) binding protein, WISH, induces Arp2/3 complex activation independent of Cdc42.</title>
        <authorList>
            <person name="Fukuoka M."/>
            <person name="Suetsugu S."/>
            <person name="Miki H."/>
            <person name="Fukami K."/>
            <person name="Endo T."/>
            <person name="Takenawa T."/>
        </authorList>
    </citation>
    <scope>NUCLEOTIDE SEQUENCE [MRNA]</scope>
    <scope>POSSIBLE FUNCTION</scope>
    <source>
        <tissue>Myoblast</tissue>
    </source>
</reference>
<reference key="2">
    <citation type="journal article" date="2005" name="Science">
        <title>The transcriptional landscape of the mammalian genome.</title>
        <authorList>
            <person name="Carninci P."/>
            <person name="Kasukawa T."/>
            <person name="Katayama S."/>
            <person name="Gough J."/>
            <person name="Frith M.C."/>
            <person name="Maeda N."/>
            <person name="Oyama R."/>
            <person name="Ravasi T."/>
            <person name="Lenhard B."/>
            <person name="Wells C."/>
            <person name="Kodzius R."/>
            <person name="Shimokawa K."/>
            <person name="Bajic V.B."/>
            <person name="Brenner S.E."/>
            <person name="Batalov S."/>
            <person name="Forrest A.R."/>
            <person name="Zavolan M."/>
            <person name="Davis M.J."/>
            <person name="Wilming L.G."/>
            <person name="Aidinis V."/>
            <person name="Allen J.E."/>
            <person name="Ambesi-Impiombato A."/>
            <person name="Apweiler R."/>
            <person name="Aturaliya R.N."/>
            <person name="Bailey T.L."/>
            <person name="Bansal M."/>
            <person name="Baxter L."/>
            <person name="Beisel K.W."/>
            <person name="Bersano T."/>
            <person name="Bono H."/>
            <person name="Chalk A.M."/>
            <person name="Chiu K.P."/>
            <person name="Choudhary V."/>
            <person name="Christoffels A."/>
            <person name="Clutterbuck D.R."/>
            <person name="Crowe M.L."/>
            <person name="Dalla E."/>
            <person name="Dalrymple B.P."/>
            <person name="de Bono B."/>
            <person name="Della Gatta G."/>
            <person name="di Bernardo D."/>
            <person name="Down T."/>
            <person name="Engstrom P."/>
            <person name="Fagiolini M."/>
            <person name="Faulkner G."/>
            <person name="Fletcher C.F."/>
            <person name="Fukushima T."/>
            <person name="Furuno M."/>
            <person name="Futaki S."/>
            <person name="Gariboldi M."/>
            <person name="Georgii-Hemming P."/>
            <person name="Gingeras T.R."/>
            <person name="Gojobori T."/>
            <person name="Green R.E."/>
            <person name="Gustincich S."/>
            <person name="Harbers M."/>
            <person name="Hayashi Y."/>
            <person name="Hensch T.K."/>
            <person name="Hirokawa N."/>
            <person name="Hill D."/>
            <person name="Huminiecki L."/>
            <person name="Iacono M."/>
            <person name="Ikeo K."/>
            <person name="Iwama A."/>
            <person name="Ishikawa T."/>
            <person name="Jakt M."/>
            <person name="Kanapin A."/>
            <person name="Katoh M."/>
            <person name="Kawasawa Y."/>
            <person name="Kelso J."/>
            <person name="Kitamura H."/>
            <person name="Kitano H."/>
            <person name="Kollias G."/>
            <person name="Krishnan S.P."/>
            <person name="Kruger A."/>
            <person name="Kummerfeld S.K."/>
            <person name="Kurochkin I.V."/>
            <person name="Lareau L.F."/>
            <person name="Lazarevic D."/>
            <person name="Lipovich L."/>
            <person name="Liu J."/>
            <person name="Liuni S."/>
            <person name="McWilliam S."/>
            <person name="Madan Babu M."/>
            <person name="Madera M."/>
            <person name="Marchionni L."/>
            <person name="Matsuda H."/>
            <person name="Matsuzawa S."/>
            <person name="Miki H."/>
            <person name="Mignone F."/>
            <person name="Miyake S."/>
            <person name="Morris K."/>
            <person name="Mottagui-Tabar S."/>
            <person name="Mulder N."/>
            <person name="Nakano N."/>
            <person name="Nakauchi H."/>
            <person name="Ng P."/>
            <person name="Nilsson R."/>
            <person name="Nishiguchi S."/>
            <person name="Nishikawa S."/>
            <person name="Nori F."/>
            <person name="Ohara O."/>
            <person name="Okazaki Y."/>
            <person name="Orlando V."/>
            <person name="Pang K.C."/>
            <person name="Pavan W.J."/>
            <person name="Pavesi G."/>
            <person name="Pesole G."/>
            <person name="Petrovsky N."/>
            <person name="Piazza S."/>
            <person name="Reed J."/>
            <person name="Reid J.F."/>
            <person name="Ring B.Z."/>
            <person name="Ringwald M."/>
            <person name="Rost B."/>
            <person name="Ruan Y."/>
            <person name="Salzberg S.L."/>
            <person name="Sandelin A."/>
            <person name="Schneider C."/>
            <person name="Schoenbach C."/>
            <person name="Sekiguchi K."/>
            <person name="Semple C.A."/>
            <person name="Seno S."/>
            <person name="Sessa L."/>
            <person name="Sheng Y."/>
            <person name="Shibata Y."/>
            <person name="Shimada H."/>
            <person name="Shimada K."/>
            <person name="Silva D."/>
            <person name="Sinclair B."/>
            <person name="Sperling S."/>
            <person name="Stupka E."/>
            <person name="Sugiura K."/>
            <person name="Sultana R."/>
            <person name="Takenaka Y."/>
            <person name="Taki K."/>
            <person name="Tammoja K."/>
            <person name="Tan S.L."/>
            <person name="Tang S."/>
            <person name="Taylor M.S."/>
            <person name="Tegner J."/>
            <person name="Teichmann S.A."/>
            <person name="Ueda H.R."/>
            <person name="van Nimwegen E."/>
            <person name="Verardo R."/>
            <person name="Wei C.L."/>
            <person name="Yagi K."/>
            <person name="Yamanishi H."/>
            <person name="Zabarovsky E."/>
            <person name="Zhu S."/>
            <person name="Zimmer A."/>
            <person name="Hide W."/>
            <person name="Bult C."/>
            <person name="Grimmond S.M."/>
            <person name="Teasdale R.D."/>
            <person name="Liu E.T."/>
            <person name="Brusic V."/>
            <person name="Quackenbush J."/>
            <person name="Wahlestedt C."/>
            <person name="Mattick J.S."/>
            <person name="Hume D.A."/>
            <person name="Kai C."/>
            <person name="Sasaki D."/>
            <person name="Tomaru Y."/>
            <person name="Fukuda S."/>
            <person name="Kanamori-Katayama M."/>
            <person name="Suzuki M."/>
            <person name="Aoki J."/>
            <person name="Arakawa T."/>
            <person name="Iida J."/>
            <person name="Imamura K."/>
            <person name="Itoh M."/>
            <person name="Kato T."/>
            <person name="Kawaji H."/>
            <person name="Kawagashira N."/>
            <person name="Kawashima T."/>
            <person name="Kojima M."/>
            <person name="Kondo S."/>
            <person name="Konno H."/>
            <person name="Nakano K."/>
            <person name="Ninomiya N."/>
            <person name="Nishio T."/>
            <person name="Okada M."/>
            <person name="Plessy C."/>
            <person name="Shibata K."/>
            <person name="Shiraki T."/>
            <person name="Suzuki S."/>
            <person name="Tagami M."/>
            <person name="Waki K."/>
            <person name="Watahiki A."/>
            <person name="Okamura-Oho Y."/>
            <person name="Suzuki H."/>
            <person name="Kawai J."/>
            <person name="Hayashizaki Y."/>
        </authorList>
    </citation>
    <scope>NUCLEOTIDE SEQUENCE [LARGE SCALE MRNA]</scope>
    <source>
        <strain>C57BL/6J</strain>
        <tissue>Medulla oblongata</tissue>
    </source>
</reference>
<reference key="3">
    <citation type="submission" date="2005-07" db="EMBL/GenBank/DDBJ databases">
        <authorList>
            <person name="Mural R.J."/>
            <person name="Adams M.D."/>
            <person name="Myers E.W."/>
            <person name="Smith H.O."/>
            <person name="Venter J.C."/>
        </authorList>
    </citation>
    <scope>NUCLEOTIDE SEQUENCE [LARGE SCALE GENOMIC DNA]</scope>
</reference>
<reference key="4">
    <citation type="journal article" date="2004" name="Genome Res.">
        <title>The status, quality, and expansion of the NIH full-length cDNA project: the Mammalian Gene Collection (MGC).</title>
        <authorList>
            <consortium name="The MGC Project Team"/>
        </authorList>
    </citation>
    <scope>NUCLEOTIDE SEQUENCE [LARGE SCALE MRNA]</scope>
</reference>
<reference key="5">
    <citation type="journal article" date="2000" name="EMBO J.">
        <title>The VacA toxin of Helicobacter pylori identifies a new intermediate filament-interacting protein.</title>
        <authorList>
            <person name="de Bernard M."/>
            <person name="Moschioni M."/>
            <person name="Napolitani G."/>
            <person name="Rappuoli R."/>
            <person name="Montecucco C."/>
        </authorList>
    </citation>
    <scope>NUCLEOTIDE SEQUENCE [MRNA] OF 216-646</scope>
</reference>
<reference key="6">
    <citation type="journal article" date="2010" name="Cell">
        <title>A tissue-specific atlas of mouse protein phosphorylation and expression.</title>
        <authorList>
            <person name="Huttlin E.L."/>
            <person name="Jedrychowski M.P."/>
            <person name="Elias J.E."/>
            <person name="Goswami T."/>
            <person name="Rad R."/>
            <person name="Beausoleil S.A."/>
            <person name="Villen J."/>
            <person name="Haas W."/>
            <person name="Sowa M.E."/>
            <person name="Gygi S.P."/>
        </authorList>
    </citation>
    <scope>PHOSPHORYLATION [LARGE SCALE ANALYSIS] AT SER-120; SER-260; SER-286 AND SER-673</scope>
    <scope>IDENTIFICATION BY MASS SPECTROMETRY [LARGE SCALE ANALYSIS]</scope>
    <source>
        <tissue>Brain</tissue>
        <tissue>Kidney</tissue>
        <tissue>Spleen</tissue>
    </source>
</reference>
<dbReference type="EMBL" id="AF130313">
    <property type="protein sequence ID" value="AAF36503.2"/>
    <property type="molecule type" value="mRNA"/>
</dbReference>
<dbReference type="EMBL" id="AK134725">
    <property type="protein sequence ID" value="BAE22259.1"/>
    <property type="molecule type" value="mRNA"/>
</dbReference>
<dbReference type="EMBL" id="CH466560">
    <property type="protein sequence ID" value="EDL21315.1"/>
    <property type="molecule type" value="Genomic_DNA"/>
</dbReference>
<dbReference type="EMBL" id="BC064818">
    <property type="protein sequence ID" value="AAH64818.1"/>
    <property type="molecule type" value="mRNA"/>
</dbReference>
<dbReference type="CCDS" id="CCDS23538.1"/>
<dbReference type="RefSeq" id="NP_109654.2">
    <property type="nucleotide sequence ID" value="NM_030729.4"/>
</dbReference>
<dbReference type="SMR" id="Q9ESJ4"/>
<dbReference type="BioGRID" id="219860">
    <property type="interactions" value="4"/>
</dbReference>
<dbReference type="FunCoup" id="Q9ESJ4">
    <property type="interactions" value="811"/>
</dbReference>
<dbReference type="IntAct" id="Q9ESJ4">
    <property type="interactions" value="3"/>
</dbReference>
<dbReference type="MINT" id="Q9ESJ4"/>
<dbReference type="STRING" id="10090.ENSMUSP00000035218"/>
<dbReference type="GlyGen" id="Q9ESJ4">
    <property type="glycosylation" value="3 sites, 1 O-linked glycan (2 sites)"/>
</dbReference>
<dbReference type="iPTMnet" id="Q9ESJ4"/>
<dbReference type="PhosphoSitePlus" id="Q9ESJ4"/>
<dbReference type="SwissPalm" id="Q9ESJ4"/>
<dbReference type="jPOST" id="Q9ESJ4"/>
<dbReference type="PaxDb" id="10090-ENSMUSP00000035218"/>
<dbReference type="PeptideAtlas" id="Q9ESJ4"/>
<dbReference type="ProteomicsDB" id="258593"/>
<dbReference type="Pumba" id="Q9ESJ4"/>
<dbReference type="Antibodypedia" id="30227">
    <property type="antibodies" value="133 antibodies from 27 providers"/>
</dbReference>
<dbReference type="DNASU" id="80987"/>
<dbReference type="Ensembl" id="ENSMUST00000035218.9">
    <property type="protein sequence ID" value="ENSMUSP00000035218.8"/>
    <property type="gene ID" value="ENSMUSG00000032598.9"/>
</dbReference>
<dbReference type="GeneID" id="80987"/>
<dbReference type="KEGG" id="mmu:80987"/>
<dbReference type="UCSC" id="uc009rqz.1">
    <property type="organism name" value="mouse"/>
</dbReference>
<dbReference type="AGR" id="MGI:1931834"/>
<dbReference type="CTD" id="51517"/>
<dbReference type="MGI" id="MGI:1931834">
    <property type="gene designation" value="Nckipsd"/>
</dbReference>
<dbReference type="VEuPathDB" id="HostDB:ENSMUSG00000032598"/>
<dbReference type="eggNOG" id="KOG4035">
    <property type="taxonomic scope" value="Eukaryota"/>
</dbReference>
<dbReference type="GeneTree" id="ENSGT00390000015725"/>
<dbReference type="HOGENOM" id="CLU_012978_1_0_1"/>
<dbReference type="InParanoid" id="Q9ESJ4"/>
<dbReference type="OMA" id="TGFERQY"/>
<dbReference type="OrthoDB" id="445362at2759"/>
<dbReference type="PhylomeDB" id="Q9ESJ4"/>
<dbReference type="TreeFam" id="TF324522"/>
<dbReference type="Reactome" id="R-MMU-2029482">
    <property type="pathway name" value="Regulation of actin dynamics for phagocytic cup formation"/>
</dbReference>
<dbReference type="Reactome" id="R-MMU-5663213">
    <property type="pathway name" value="RHO GTPases Activate WASPs and WAVEs"/>
</dbReference>
<dbReference type="BioGRID-ORCS" id="80987">
    <property type="hits" value="5 hits in 78 CRISPR screens"/>
</dbReference>
<dbReference type="CD-CODE" id="CE726F99">
    <property type="entry name" value="Postsynaptic density"/>
</dbReference>
<dbReference type="PRO" id="PR:Q9ESJ4"/>
<dbReference type="Proteomes" id="UP000000589">
    <property type="component" value="Chromosome 9"/>
</dbReference>
<dbReference type="RNAct" id="Q9ESJ4">
    <property type="molecule type" value="protein"/>
</dbReference>
<dbReference type="Bgee" id="ENSMUSG00000032598">
    <property type="expression patterns" value="Expressed in primary visual cortex and 72 other cell types or tissues"/>
</dbReference>
<dbReference type="ExpressionAtlas" id="Q9ESJ4">
    <property type="expression patterns" value="baseline and differential"/>
</dbReference>
<dbReference type="GO" id="GO:0008180">
    <property type="term" value="C:COP9 signalosome"/>
    <property type="evidence" value="ECO:0007669"/>
    <property type="project" value="Ensembl"/>
</dbReference>
<dbReference type="GO" id="GO:0098978">
    <property type="term" value="C:glutamatergic synapse"/>
    <property type="evidence" value="ECO:0007669"/>
    <property type="project" value="Ensembl"/>
</dbReference>
<dbReference type="GO" id="GO:0005654">
    <property type="term" value="C:nucleoplasm"/>
    <property type="evidence" value="ECO:0007669"/>
    <property type="project" value="Ensembl"/>
</dbReference>
<dbReference type="GO" id="GO:0005886">
    <property type="term" value="C:plasma membrane"/>
    <property type="evidence" value="ECO:0007669"/>
    <property type="project" value="Ensembl"/>
</dbReference>
<dbReference type="GO" id="GO:0098794">
    <property type="term" value="C:postsynapse"/>
    <property type="evidence" value="ECO:0007669"/>
    <property type="project" value="Ensembl"/>
</dbReference>
<dbReference type="GO" id="GO:0017124">
    <property type="term" value="F:SH3 domain binding"/>
    <property type="evidence" value="ECO:0007669"/>
    <property type="project" value="UniProtKB-KW"/>
</dbReference>
<dbReference type="GO" id="GO:0010976">
    <property type="term" value="P:positive regulation of neuron projection development"/>
    <property type="evidence" value="ECO:0000315"/>
    <property type="project" value="CACAO"/>
</dbReference>
<dbReference type="GO" id="GO:0150052">
    <property type="term" value="P:regulation of postsynapse assembly"/>
    <property type="evidence" value="ECO:0007669"/>
    <property type="project" value="Ensembl"/>
</dbReference>
<dbReference type="CDD" id="cd11849">
    <property type="entry name" value="SH3_SPIN90"/>
    <property type="match status" value="1"/>
</dbReference>
<dbReference type="Gene3D" id="2.30.30.40">
    <property type="entry name" value="SH3 Domains"/>
    <property type="match status" value="1"/>
</dbReference>
<dbReference type="InterPro" id="IPR036028">
    <property type="entry name" value="SH3-like_dom_sf"/>
</dbReference>
<dbReference type="InterPro" id="IPR001452">
    <property type="entry name" value="SH3_domain"/>
</dbReference>
<dbReference type="InterPro" id="IPR030125">
    <property type="entry name" value="SPIN90/Ldb17"/>
</dbReference>
<dbReference type="InterPro" id="IPR018556">
    <property type="entry name" value="SPIN90/Ldb17_LRD"/>
</dbReference>
<dbReference type="InterPro" id="IPR035514">
    <property type="entry name" value="SPIN90_SH3"/>
</dbReference>
<dbReference type="PANTHER" id="PTHR13357:SF1">
    <property type="entry name" value="NCK-INTERACTING PROTEIN WITH SH3 DOMAIN"/>
    <property type="match status" value="1"/>
</dbReference>
<dbReference type="PANTHER" id="PTHR13357">
    <property type="entry name" value="SH3 ADAPTER PROTEIN SPIN90 NCK INTERACTING PROTEIN WITH SH3 DOMAIN"/>
    <property type="match status" value="1"/>
</dbReference>
<dbReference type="Pfam" id="PF00018">
    <property type="entry name" value="SH3_1"/>
    <property type="match status" value="1"/>
</dbReference>
<dbReference type="Pfam" id="PF09431">
    <property type="entry name" value="SPIN90_LRD"/>
    <property type="match status" value="1"/>
</dbReference>
<dbReference type="SMART" id="SM00326">
    <property type="entry name" value="SH3"/>
    <property type="match status" value="1"/>
</dbReference>
<dbReference type="SUPFAM" id="SSF50044">
    <property type="entry name" value="SH3-domain"/>
    <property type="match status" value="1"/>
</dbReference>
<dbReference type="PROSITE" id="PS50002">
    <property type="entry name" value="SH3"/>
    <property type="match status" value="1"/>
</dbReference>
<organism>
    <name type="scientific">Mus musculus</name>
    <name type="common">Mouse</name>
    <dbReference type="NCBI Taxonomy" id="10090"/>
    <lineage>
        <taxon>Eukaryota</taxon>
        <taxon>Metazoa</taxon>
        <taxon>Chordata</taxon>
        <taxon>Craniata</taxon>
        <taxon>Vertebrata</taxon>
        <taxon>Euteleostomi</taxon>
        <taxon>Mammalia</taxon>
        <taxon>Eutheria</taxon>
        <taxon>Euarchontoglires</taxon>
        <taxon>Glires</taxon>
        <taxon>Rodentia</taxon>
        <taxon>Myomorpha</taxon>
        <taxon>Muroidea</taxon>
        <taxon>Muridae</taxon>
        <taxon>Murinae</taxon>
        <taxon>Mus</taxon>
        <taxon>Mus</taxon>
    </lineage>
</organism>
<comment type="function">
    <text evidence="1">Has an important role in stress fiber formation induced by active diaphanous protein homolog 1 (DRF1) (By similarity). Induces microspike formation, in vivo. In vitro, stimulates N-WASP-induced ARP2/3 complex activation in the absence of CDC42. May play an important role in the maintenance of sarcomere and/or in the assembly of myofibrils into sarcomeres. Implicated in regulation of actin polymerization and cell adhesion.</text>
</comment>
<comment type="subunit">
    <text evidence="1">Associates with the intermediate filaments, vimentin and desmin (By similarity). Binds the first and third SH3 domains of NCK (By similarity). Binds the proline-rich domains of N-WASP through its SH3 domain. Similarly, binds diaphanous protein homolog 1 (DRF1) (By similarity). Binds the SH3 domains of GRB2 through its proline-rich domains. Interacts with FASLG (By similarity).</text>
</comment>
<comment type="subcellular location">
    <subcellularLocation>
        <location evidence="1">Nucleus</location>
    </subcellularLocation>
    <text evidence="1">Colocalizes with DRF1 at membrane ruffles, and with Nck at Z-disks in mature cardiac myocytes.</text>
</comment>